<accession>Q505L3</accession>
<feature type="chain" id="PRO_0000361541" description="Vacuolar protein sorting-associated protein 51 homolog">
    <location>
        <begin position="1"/>
        <end position="757"/>
    </location>
</feature>
<feature type="coiled-coil region" evidence="2">
    <location>
        <begin position="94"/>
        <end position="124"/>
    </location>
</feature>
<feature type="coiled-coil region" evidence="2">
    <location>
        <begin position="371"/>
        <end position="392"/>
    </location>
</feature>
<reference key="1">
    <citation type="submission" date="2005-05" db="EMBL/GenBank/DDBJ databases">
        <authorList>
            <consortium name="NIH - Xenopus Gene Collection (XGC) project"/>
        </authorList>
    </citation>
    <scope>NUCLEOTIDE SEQUENCE [LARGE SCALE MRNA]</scope>
    <source>
        <tissue>Brain</tissue>
    </source>
</reference>
<dbReference type="EMBL" id="BC094495">
    <property type="protein sequence ID" value="AAH94495.1"/>
    <property type="molecule type" value="mRNA"/>
</dbReference>
<dbReference type="RefSeq" id="NP_001089434.1">
    <property type="nucleotide sequence ID" value="NM_001095965.1"/>
</dbReference>
<dbReference type="SMR" id="Q505L3"/>
<dbReference type="DNASU" id="734484"/>
<dbReference type="GeneID" id="734484"/>
<dbReference type="KEGG" id="xla:734484"/>
<dbReference type="AGR" id="Xenbase:XB-GENE-1005396"/>
<dbReference type="CTD" id="734484"/>
<dbReference type="Xenbase" id="XB-GENE-1005396">
    <property type="gene designation" value="vps51.S"/>
</dbReference>
<dbReference type="OrthoDB" id="203678at2759"/>
<dbReference type="Proteomes" id="UP000186698">
    <property type="component" value="Chromosome 4S"/>
</dbReference>
<dbReference type="Bgee" id="734484">
    <property type="expression patterns" value="Expressed in testis and 19 other cell types or tissues"/>
</dbReference>
<dbReference type="GO" id="GO:0005829">
    <property type="term" value="C:cytosol"/>
    <property type="evidence" value="ECO:0007669"/>
    <property type="project" value="GOC"/>
</dbReference>
<dbReference type="GO" id="GO:1990745">
    <property type="term" value="C:EARP complex"/>
    <property type="evidence" value="ECO:0000250"/>
    <property type="project" value="UniProtKB"/>
</dbReference>
<dbReference type="GO" id="GO:0000938">
    <property type="term" value="C:GARP complex"/>
    <property type="evidence" value="ECO:0000250"/>
    <property type="project" value="UniProtKB"/>
</dbReference>
<dbReference type="GO" id="GO:0016020">
    <property type="term" value="C:membrane"/>
    <property type="evidence" value="ECO:0000318"/>
    <property type="project" value="GO_Central"/>
</dbReference>
<dbReference type="GO" id="GO:0055037">
    <property type="term" value="C:recycling endosome"/>
    <property type="evidence" value="ECO:0000250"/>
    <property type="project" value="UniProtKB"/>
</dbReference>
<dbReference type="GO" id="GO:0032456">
    <property type="term" value="P:endocytic recycling"/>
    <property type="evidence" value="ECO:0000250"/>
    <property type="project" value="UniProtKB"/>
</dbReference>
<dbReference type="GO" id="GO:0007030">
    <property type="term" value="P:Golgi organization"/>
    <property type="evidence" value="ECO:0000318"/>
    <property type="project" value="GO_Central"/>
</dbReference>
<dbReference type="GO" id="GO:0048193">
    <property type="term" value="P:Golgi vesicle transport"/>
    <property type="evidence" value="ECO:0000318"/>
    <property type="project" value="GO_Central"/>
</dbReference>
<dbReference type="GO" id="GO:0006869">
    <property type="term" value="P:lipid transport"/>
    <property type="evidence" value="ECO:0007669"/>
    <property type="project" value="UniProtKB-KW"/>
</dbReference>
<dbReference type="GO" id="GO:0007041">
    <property type="term" value="P:lysosomal transport"/>
    <property type="evidence" value="ECO:0000318"/>
    <property type="project" value="GO_Central"/>
</dbReference>
<dbReference type="GO" id="GO:0015031">
    <property type="term" value="P:protein transport"/>
    <property type="evidence" value="ECO:0007669"/>
    <property type="project" value="UniProtKB-KW"/>
</dbReference>
<dbReference type="GO" id="GO:0042147">
    <property type="term" value="P:retrograde transport, endosome to Golgi"/>
    <property type="evidence" value="ECO:0000318"/>
    <property type="project" value="GO_Central"/>
</dbReference>
<dbReference type="InterPro" id="IPR016159">
    <property type="entry name" value="Cullin_repeat-like_dom_sf"/>
</dbReference>
<dbReference type="InterPro" id="IPR039481">
    <property type="entry name" value="EXOC2/Sec5_N_dom"/>
</dbReference>
<dbReference type="InterPro" id="IPR014812">
    <property type="entry name" value="Vps51"/>
</dbReference>
<dbReference type="PANTHER" id="PTHR15954">
    <property type="entry name" value="VACUOLAR PROTEIN SORTING-ASSOCIATED PROTEIN 51 HOMOLOG"/>
    <property type="match status" value="1"/>
</dbReference>
<dbReference type="PANTHER" id="PTHR15954:SF4">
    <property type="entry name" value="VACUOLAR PROTEIN SORTING-ASSOCIATED PROTEIN 51 HOMOLOG"/>
    <property type="match status" value="1"/>
</dbReference>
<dbReference type="Pfam" id="PF15469">
    <property type="entry name" value="Sec5"/>
    <property type="match status" value="1"/>
</dbReference>
<dbReference type="SUPFAM" id="SSF74788">
    <property type="entry name" value="Cullin repeat-like"/>
    <property type="match status" value="1"/>
</dbReference>
<evidence type="ECO:0000250" key="1">
    <source>
        <dbReference type="UniProtKB" id="Q9UID3"/>
    </source>
</evidence>
<evidence type="ECO:0000255" key="2"/>
<evidence type="ECO:0000305" key="3"/>
<comment type="function">
    <text evidence="1">Involved in retrograde transport from early and late endosomes to the late Golgi. The GARP complex is required for the maintenance of protein retrieval from endosomes to the TGN, acid hydrolase sorting, lysosome function, endosomal cholesterol traffic and autophagy. Acts as a component of the EARP complex that is involved in endocytic recycling.</text>
</comment>
<comment type="subunit">
    <text evidence="1">Component of the Golgi-associated retrograde protein (GARP) complex Component of the endosome-associated retrograde protein (EARP) complex.</text>
</comment>
<comment type="subcellular location">
    <subcellularLocation>
        <location evidence="1">Golgi apparatus</location>
        <location evidence="1">trans-Golgi network</location>
    </subcellularLocation>
    <subcellularLocation>
        <location evidence="1">Recycling endosome</location>
    </subcellularLocation>
    <text evidence="1">Localizes to the trans-Golgi network as part of the GARP complex, while it localizes to recycling endosomes as part of the EARP complex.</text>
</comment>
<comment type="similarity">
    <text evidence="3">Belongs to the VPS51 family.</text>
</comment>
<proteinExistence type="evidence at transcript level"/>
<protein>
    <recommendedName>
        <fullName>Vacuolar protein sorting-associated protein 51 homolog</fullName>
    </recommendedName>
    <alternativeName>
        <fullName>Protein fat-free homolog</fullName>
    </alternativeName>
</protein>
<name>VPS51_XENLA</name>
<keyword id="KW-0175">Coiled coil</keyword>
<keyword id="KW-0967">Endosome</keyword>
<keyword id="KW-0333">Golgi apparatus</keyword>
<keyword id="KW-0445">Lipid transport</keyword>
<keyword id="KW-0653">Protein transport</keyword>
<keyword id="KW-1185">Reference proteome</keyword>
<keyword id="KW-0813">Transport</keyword>
<organism>
    <name type="scientific">Xenopus laevis</name>
    <name type="common">African clawed frog</name>
    <dbReference type="NCBI Taxonomy" id="8355"/>
    <lineage>
        <taxon>Eukaryota</taxon>
        <taxon>Metazoa</taxon>
        <taxon>Chordata</taxon>
        <taxon>Craniata</taxon>
        <taxon>Vertebrata</taxon>
        <taxon>Euteleostomi</taxon>
        <taxon>Amphibia</taxon>
        <taxon>Batrachia</taxon>
        <taxon>Anura</taxon>
        <taxon>Pipoidea</taxon>
        <taxon>Pipidae</taxon>
        <taxon>Xenopodinae</taxon>
        <taxon>Xenopus</taxon>
        <taxon>Xenopus</taxon>
    </lineage>
</organism>
<sequence length="757" mass="84787">MATVEEEESAKKKKSHGILKLYYGMTEEGKAAERHLEPTDVDGVHFNPELYLTKLRKESSLSQLMDVEADMVRQIRSLDSEMQTLVYENYNKFISATDTIRKMKNDFKKMEDEMDGLASNMAVITEFSARISSTLQVSHQQITKLSGVHTLLRKLQFLFELPARLKKCIELGAYGQAVSYHSKARSVLHQYQHMPSFHGIQTDCQAIMAGLADTLRQRFRDPASSPQELSECVEMLLNLEEPAHLLCDEFLAHGRGRLASHLSDLQESGDILEFVDRGCGGFISDACLLAASYQSLFSKEPGNSAQMAEAKLTVFLEELSTGYFELVEKRLHQEKSLGDNSLLVRALDRFHRRLQAPSKLVPGCGFNRRGTEIVVRAAQERLAQYLQSLKEFFQGCLTDVRQALAAPRLPGKETSGLGDLLAGLSASVLNQIKTVLAAVHLFTAKDVAFSNKAYFKGEFCSQGVREGLIVAFITSVCQTARQFCEIPGEKGTSTPPSLLLLLSRLCLDYETSTISYILTLTDEQFLGQDRSPVTPVSSLCSLARSTAQTLLNQFVKYQGLVVSQMLRKSVETRDWVTTIEPRNVRAVMKRVVEDITGVDVQVGLLYEEGARKAHSSDSSKRTFSVYSSSRLQGRYAQSYTPSAPMDTNLLSNIQKLFSERIDIFSSVQFNKVSILTGIIKISLKTFLECVRLRTFGRYGLQQIQVDCHYLQLYLWRFVSDENLVHCLLDEVVGSAAHRCLDPAPMEQSVIEVICERG</sequence>
<gene>
    <name type="primary">vps51</name>
    <name type="synonym">ffr</name>
</gene>